<reference key="1">
    <citation type="journal article" date="2010" name="ISME J.">
        <title>The complete genome sequence of the algal symbiont Dinoroseobacter shibae: a hitchhiker's guide to life in the sea.</title>
        <authorList>
            <person name="Wagner-Dobler I."/>
            <person name="Ballhausen B."/>
            <person name="Berger M."/>
            <person name="Brinkhoff T."/>
            <person name="Buchholz I."/>
            <person name="Bunk B."/>
            <person name="Cypionka H."/>
            <person name="Daniel R."/>
            <person name="Drepper T."/>
            <person name="Gerdts G."/>
            <person name="Hahnke S."/>
            <person name="Han C."/>
            <person name="Jahn D."/>
            <person name="Kalhoefer D."/>
            <person name="Kiss H."/>
            <person name="Klenk H.P."/>
            <person name="Kyrpides N."/>
            <person name="Liebl W."/>
            <person name="Liesegang H."/>
            <person name="Meincke L."/>
            <person name="Pati A."/>
            <person name="Petersen J."/>
            <person name="Piekarski T."/>
            <person name="Pommerenke C."/>
            <person name="Pradella S."/>
            <person name="Pukall R."/>
            <person name="Rabus R."/>
            <person name="Stackebrandt E."/>
            <person name="Thole S."/>
            <person name="Thompson L."/>
            <person name="Tielen P."/>
            <person name="Tomasch J."/>
            <person name="von Jan M."/>
            <person name="Wanphrut N."/>
            <person name="Wichels A."/>
            <person name="Zech H."/>
            <person name="Simon M."/>
        </authorList>
    </citation>
    <scope>NUCLEOTIDE SEQUENCE [LARGE SCALE GENOMIC DNA]</scope>
    <source>
        <strain>DSM 16493 / NCIMB 14021 / DFL 12</strain>
    </source>
</reference>
<accession>A8LLC1</accession>
<dbReference type="EC" id="3.1.26.4" evidence="1"/>
<dbReference type="EMBL" id="CP000830">
    <property type="protein sequence ID" value="ABV91931.1"/>
    <property type="molecule type" value="Genomic_DNA"/>
</dbReference>
<dbReference type="RefSeq" id="WP_012176864.1">
    <property type="nucleotide sequence ID" value="NC_009952.1"/>
</dbReference>
<dbReference type="SMR" id="A8LLC1"/>
<dbReference type="STRING" id="398580.Dshi_0182"/>
<dbReference type="KEGG" id="dsh:Dshi_0182"/>
<dbReference type="eggNOG" id="COG0328">
    <property type="taxonomic scope" value="Bacteria"/>
</dbReference>
<dbReference type="HOGENOM" id="CLU_030894_6_0_5"/>
<dbReference type="OrthoDB" id="7845843at2"/>
<dbReference type="Proteomes" id="UP000006833">
    <property type="component" value="Chromosome"/>
</dbReference>
<dbReference type="GO" id="GO:0005737">
    <property type="term" value="C:cytoplasm"/>
    <property type="evidence" value="ECO:0007669"/>
    <property type="project" value="UniProtKB-SubCell"/>
</dbReference>
<dbReference type="GO" id="GO:0000287">
    <property type="term" value="F:magnesium ion binding"/>
    <property type="evidence" value="ECO:0007669"/>
    <property type="project" value="UniProtKB-UniRule"/>
</dbReference>
<dbReference type="GO" id="GO:0003676">
    <property type="term" value="F:nucleic acid binding"/>
    <property type="evidence" value="ECO:0007669"/>
    <property type="project" value="InterPro"/>
</dbReference>
<dbReference type="GO" id="GO:0004523">
    <property type="term" value="F:RNA-DNA hybrid ribonuclease activity"/>
    <property type="evidence" value="ECO:0007669"/>
    <property type="project" value="UniProtKB-UniRule"/>
</dbReference>
<dbReference type="GO" id="GO:0043137">
    <property type="term" value="P:DNA replication, removal of RNA primer"/>
    <property type="evidence" value="ECO:0007669"/>
    <property type="project" value="TreeGrafter"/>
</dbReference>
<dbReference type="CDD" id="cd09278">
    <property type="entry name" value="RNase_HI_prokaryote_like"/>
    <property type="match status" value="1"/>
</dbReference>
<dbReference type="FunFam" id="3.30.420.10:FF:000089">
    <property type="entry name" value="Ribonuclease H"/>
    <property type="match status" value="1"/>
</dbReference>
<dbReference type="Gene3D" id="3.30.420.10">
    <property type="entry name" value="Ribonuclease H-like superfamily/Ribonuclease H"/>
    <property type="match status" value="1"/>
</dbReference>
<dbReference type="HAMAP" id="MF_00042">
    <property type="entry name" value="RNase_H"/>
    <property type="match status" value="1"/>
</dbReference>
<dbReference type="InterPro" id="IPR050092">
    <property type="entry name" value="RNase_H"/>
</dbReference>
<dbReference type="InterPro" id="IPR012337">
    <property type="entry name" value="RNaseH-like_sf"/>
</dbReference>
<dbReference type="InterPro" id="IPR002156">
    <property type="entry name" value="RNaseH_domain"/>
</dbReference>
<dbReference type="InterPro" id="IPR036397">
    <property type="entry name" value="RNaseH_sf"/>
</dbReference>
<dbReference type="InterPro" id="IPR022892">
    <property type="entry name" value="RNaseHI"/>
</dbReference>
<dbReference type="NCBIfam" id="NF001236">
    <property type="entry name" value="PRK00203.1"/>
    <property type="match status" value="1"/>
</dbReference>
<dbReference type="PANTHER" id="PTHR10642">
    <property type="entry name" value="RIBONUCLEASE H1"/>
    <property type="match status" value="1"/>
</dbReference>
<dbReference type="PANTHER" id="PTHR10642:SF26">
    <property type="entry name" value="RIBONUCLEASE H1"/>
    <property type="match status" value="1"/>
</dbReference>
<dbReference type="Pfam" id="PF00075">
    <property type="entry name" value="RNase_H"/>
    <property type="match status" value="1"/>
</dbReference>
<dbReference type="SUPFAM" id="SSF53098">
    <property type="entry name" value="Ribonuclease H-like"/>
    <property type="match status" value="1"/>
</dbReference>
<dbReference type="PROSITE" id="PS50879">
    <property type="entry name" value="RNASE_H_1"/>
    <property type="match status" value="1"/>
</dbReference>
<protein>
    <recommendedName>
        <fullName evidence="1">Ribonuclease H</fullName>
        <shortName evidence="1">RNase H</shortName>
        <ecNumber evidence="1">3.1.26.4</ecNumber>
    </recommendedName>
</protein>
<feature type="chain" id="PRO_0000332593" description="Ribonuclease H">
    <location>
        <begin position="1"/>
        <end position="157"/>
    </location>
</feature>
<feature type="domain" description="RNase H type-1" evidence="2">
    <location>
        <begin position="1"/>
        <end position="146"/>
    </location>
</feature>
<feature type="binding site" evidence="1">
    <location>
        <position position="9"/>
    </location>
    <ligand>
        <name>Mg(2+)</name>
        <dbReference type="ChEBI" id="CHEBI:18420"/>
        <label>1</label>
    </ligand>
</feature>
<feature type="binding site" evidence="1">
    <location>
        <position position="9"/>
    </location>
    <ligand>
        <name>Mg(2+)</name>
        <dbReference type="ChEBI" id="CHEBI:18420"/>
        <label>2</label>
    </ligand>
</feature>
<feature type="binding site" evidence="1">
    <location>
        <position position="52"/>
    </location>
    <ligand>
        <name>Mg(2+)</name>
        <dbReference type="ChEBI" id="CHEBI:18420"/>
        <label>1</label>
    </ligand>
</feature>
<feature type="binding site" evidence="1">
    <location>
        <position position="74"/>
    </location>
    <ligand>
        <name>Mg(2+)</name>
        <dbReference type="ChEBI" id="CHEBI:18420"/>
        <label>1</label>
    </ligand>
</feature>
<feature type="binding site" evidence="1">
    <location>
        <position position="138"/>
    </location>
    <ligand>
        <name>Mg(2+)</name>
        <dbReference type="ChEBI" id="CHEBI:18420"/>
        <label>2</label>
    </ligand>
</feature>
<organism>
    <name type="scientific">Dinoroseobacter shibae (strain DSM 16493 / NCIMB 14021 / DFL 12)</name>
    <dbReference type="NCBI Taxonomy" id="398580"/>
    <lineage>
        <taxon>Bacteria</taxon>
        <taxon>Pseudomonadati</taxon>
        <taxon>Pseudomonadota</taxon>
        <taxon>Alphaproteobacteria</taxon>
        <taxon>Rhodobacterales</taxon>
        <taxon>Roseobacteraceae</taxon>
        <taxon>Dinoroseobacter</taxon>
    </lineage>
</organism>
<comment type="function">
    <text evidence="1">Endonuclease that specifically degrades the RNA of RNA-DNA hybrids.</text>
</comment>
<comment type="catalytic activity">
    <reaction evidence="1">
        <text>Endonucleolytic cleavage to 5'-phosphomonoester.</text>
        <dbReference type="EC" id="3.1.26.4"/>
    </reaction>
</comment>
<comment type="cofactor">
    <cofactor evidence="1">
        <name>Mg(2+)</name>
        <dbReference type="ChEBI" id="CHEBI:18420"/>
    </cofactor>
    <text evidence="1">Binds 1 Mg(2+) ion per subunit. May bind a second metal ion at a regulatory site, or after substrate binding.</text>
</comment>
<comment type="subunit">
    <text evidence="1">Monomer.</text>
</comment>
<comment type="subcellular location">
    <subcellularLocation>
        <location evidence="1">Cytoplasm</location>
    </subcellularLocation>
</comment>
<comment type="similarity">
    <text evidence="1">Belongs to the RNase H family.</text>
</comment>
<name>RNH_DINSH</name>
<evidence type="ECO:0000255" key="1">
    <source>
        <dbReference type="HAMAP-Rule" id="MF_00042"/>
    </source>
</evidence>
<evidence type="ECO:0000255" key="2">
    <source>
        <dbReference type="PROSITE-ProRule" id="PRU00408"/>
    </source>
</evidence>
<proteinExistence type="inferred from homology"/>
<sequence>MPELFAYTDGACSGNPGPGGWGALLIARDGDTVVKERALKGGEAETTNNRMELLAAIHALEALERPARLTVVTDSAYVKGGVTGWIHGWKRNGWKTSTKKPVKNEDLWRRLDAAQARHEVQWEWVKGHAGHPENERADALAREGMAPFKPGKSKAGR</sequence>
<keyword id="KW-0963">Cytoplasm</keyword>
<keyword id="KW-0255">Endonuclease</keyword>
<keyword id="KW-0378">Hydrolase</keyword>
<keyword id="KW-0460">Magnesium</keyword>
<keyword id="KW-0479">Metal-binding</keyword>
<keyword id="KW-0540">Nuclease</keyword>
<keyword id="KW-1185">Reference proteome</keyword>
<gene>
    <name evidence="1" type="primary">rnhA</name>
    <name type="ordered locus">Dshi_0182</name>
</gene>